<gene>
    <name evidence="1" type="primary">cemA</name>
    <name type="ordered locus">PS135</name>
</gene>
<geneLocation type="chloroplast"/>
<sequence length="230" mass="27155">MKKKKALPSFLYLVFIVLLPWGVSFSFNKCLELWIKNWWNTRQSETFLTDIQEKRILEGFIELEELFLLDEMIKEKPKTHVQKLPIGIHKEIIQLAKIDNEDHLHIILHFSTNIICLAILSGSFFLGKEELVILNSWVQEFFYNLNDSIKAFFILLVTDFFVGFHSTRGWELLIRWVYNNLGWAPNELIFTIFVCSFPVILDTCLKFWVFFCLNRLSPSLVVIYHSISEA</sequence>
<accession>Q6L388</accession>
<keyword id="KW-0050">Antiport</keyword>
<keyword id="KW-0150">Chloroplast</keyword>
<keyword id="KW-0375">Hydrogen ion transport</keyword>
<keyword id="KW-0406">Ion transport</keyword>
<keyword id="KW-0472">Membrane</keyword>
<keyword id="KW-0934">Plastid</keyword>
<keyword id="KW-1001">Plastid inner membrane</keyword>
<keyword id="KW-0630">Potassium</keyword>
<keyword id="KW-0633">Potassium transport</keyword>
<keyword id="KW-0812">Transmembrane</keyword>
<keyword id="KW-1133">Transmembrane helix</keyword>
<keyword id="KW-0813">Transport</keyword>
<feature type="chain" id="PRO_0000216660" description="Potassium/proton antiporter CemA">
    <location>
        <begin position="1"/>
        <end position="230"/>
    </location>
</feature>
<feature type="transmembrane region" description="Helical" evidence="1">
    <location>
        <begin position="7"/>
        <end position="27"/>
    </location>
</feature>
<feature type="transmembrane region" description="Helical" evidence="1">
    <location>
        <begin position="106"/>
        <end position="126"/>
    </location>
</feature>
<feature type="transmembrane region" description="Helical" evidence="1">
    <location>
        <begin position="145"/>
        <end position="165"/>
    </location>
</feature>
<feature type="transmembrane region" description="Helical" evidence="1">
    <location>
        <begin position="181"/>
        <end position="201"/>
    </location>
</feature>
<reference key="1">
    <citation type="journal article" date="2004" name="Curr. Genet.">
        <title>Structural features and transcript-editing analysis of sugarcane (Saccharum officinarum L.) chloroplast genome.</title>
        <authorList>
            <person name="Calsa T. Jr."/>
            <person name="Carraro D.M."/>
            <person name="Benatti M.R."/>
            <person name="Barbosa A.C."/>
            <person name="Kitajima J.P."/>
            <person name="Carrer H."/>
        </authorList>
    </citation>
    <scope>NUCLEOTIDE SEQUENCE [LARGE SCALE GENOMIC DNA]</scope>
    <source>
        <strain>cv. SP-80-3280</strain>
    </source>
</reference>
<comment type="function">
    <text evidence="1">Contributes to K(+)/H(+) antiport activity by supporting proton efflux to control proton extrusion and homeostasis in chloroplasts in a light-dependent manner to modulate photosynthesis. Prevents excessive induction of non-photochemical quenching (NPQ) under continuous-light conditions. Indirectly promotes efficient inorganic carbon uptake into chloroplasts.</text>
</comment>
<comment type="catalytic activity">
    <reaction evidence="1">
        <text>K(+)(in) + H(+)(out) = K(+)(out) + H(+)(in)</text>
        <dbReference type="Rhea" id="RHEA:29467"/>
        <dbReference type="ChEBI" id="CHEBI:15378"/>
        <dbReference type="ChEBI" id="CHEBI:29103"/>
    </reaction>
</comment>
<comment type="subcellular location">
    <subcellularLocation>
        <location evidence="1">Plastid</location>
        <location evidence="1">Chloroplast inner membrane</location>
        <topology evidence="1">Multi-pass membrane protein</topology>
    </subcellularLocation>
</comment>
<comment type="similarity">
    <text evidence="1 2">Belongs to the CemA family.</text>
</comment>
<name>CEMA_SACHY</name>
<protein>
    <recommendedName>
        <fullName evidence="1">Potassium/proton antiporter CemA</fullName>
    </recommendedName>
    <alternativeName>
        <fullName evidence="1">Chloroplast envelope membrane protein A</fullName>
        <shortName evidence="1">CemA</shortName>
    </alternativeName>
</protein>
<organism>
    <name type="scientific">Saccharum hybrid</name>
    <name type="common">Sugarcane</name>
    <dbReference type="NCBI Taxonomy" id="15819"/>
    <lineage>
        <taxon>Eukaryota</taxon>
        <taxon>Viridiplantae</taxon>
        <taxon>Streptophyta</taxon>
        <taxon>Embryophyta</taxon>
        <taxon>Tracheophyta</taxon>
        <taxon>Spermatophyta</taxon>
        <taxon>Magnoliopsida</taxon>
        <taxon>Liliopsida</taxon>
        <taxon>Poales</taxon>
        <taxon>Poaceae</taxon>
        <taxon>PACMAD clade</taxon>
        <taxon>Panicoideae</taxon>
        <taxon>Andropogonodae</taxon>
        <taxon>Andropogoneae</taxon>
        <taxon>Saccharinae</taxon>
        <taxon>Saccharum</taxon>
    </lineage>
</organism>
<proteinExistence type="inferred from homology"/>
<evidence type="ECO:0000255" key="1">
    <source>
        <dbReference type="HAMAP-Rule" id="MF_01308"/>
    </source>
</evidence>
<evidence type="ECO:0000305" key="2"/>
<dbReference type="EMBL" id="AE009947">
    <property type="protein sequence ID" value="AAT44704.1"/>
    <property type="molecule type" value="Genomic_DNA"/>
</dbReference>
<dbReference type="SMR" id="Q6L388"/>
<dbReference type="GO" id="GO:0009706">
    <property type="term" value="C:chloroplast inner membrane"/>
    <property type="evidence" value="ECO:0007669"/>
    <property type="project" value="UniProtKB-SubCell"/>
</dbReference>
<dbReference type="GO" id="GO:0015297">
    <property type="term" value="F:antiporter activity"/>
    <property type="evidence" value="ECO:0007669"/>
    <property type="project" value="UniProtKB-KW"/>
</dbReference>
<dbReference type="GO" id="GO:0015078">
    <property type="term" value="F:proton transmembrane transporter activity"/>
    <property type="evidence" value="ECO:0007669"/>
    <property type="project" value="UniProtKB-UniRule"/>
</dbReference>
<dbReference type="GO" id="GO:0006813">
    <property type="term" value="P:potassium ion transport"/>
    <property type="evidence" value="ECO:0007669"/>
    <property type="project" value="UniProtKB-UniRule"/>
</dbReference>
<dbReference type="HAMAP" id="MF_01308">
    <property type="entry name" value="CemA_PxcA"/>
    <property type="match status" value="1"/>
</dbReference>
<dbReference type="InterPro" id="IPR004282">
    <property type="entry name" value="CemA"/>
</dbReference>
<dbReference type="PANTHER" id="PTHR33650:SF2">
    <property type="entry name" value="CHLOROPLAST ENVELOPE MEMBRANE PROTEIN"/>
    <property type="match status" value="1"/>
</dbReference>
<dbReference type="PANTHER" id="PTHR33650">
    <property type="entry name" value="CHLOROPLAST ENVELOPE MEMBRANE PROTEIN-RELATED"/>
    <property type="match status" value="1"/>
</dbReference>
<dbReference type="Pfam" id="PF03040">
    <property type="entry name" value="CemA"/>
    <property type="match status" value="1"/>
</dbReference>